<gene>
    <name evidence="1" type="primary">rpmG</name>
    <name type="ordered locus">RBE_1379</name>
</gene>
<sequence length="56" mass="6619">MAKKNKNILVRLVSTAGTGFFLVKKRNPKTQTEKLSFRKYDPKVRKHVLFKEEKIK</sequence>
<accession>Q1RGQ4</accession>
<dbReference type="EMBL" id="CP000087">
    <property type="protein sequence ID" value="ABE05460.1"/>
    <property type="molecule type" value="Genomic_DNA"/>
</dbReference>
<dbReference type="RefSeq" id="WP_011478029.1">
    <property type="nucleotide sequence ID" value="NC_007940.1"/>
</dbReference>
<dbReference type="SMR" id="Q1RGQ4"/>
<dbReference type="KEGG" id="rbe:RBE_1379"/>
<dbReference type="eggNOG" id="COG0267">
    <property type="taxonomic scope" value="Bacteria"/>
</dbReference>
<dbReference type="HOGENOM" id="CLU_190949_1_0_5"/>
<dbReference type="OrthoDB" id="21586at2"/>
<dbReference type="Proteomes" id="UP000001951">
    <property type="component" value="Chromosome"/>
</dbReference>
<dbReference type="GO" id="GO:0005737">
    <property type="term" value="C:cytoplasm"/>
    <property type="evidence" value="ECO:0007669"/>
    <property type="project" value="UniProtKB-ARBA"/>
</dbReference>
<dbReference type="GO" id="GO:0015934">
    <property type="term" value="C:large ribosomal subunit"/>
    <property type="evidence" value="ECO:0007669"/>
    <property type="project" value="TreeGrafter"/>
</dbReference>
<dbReference type="GO" id="GO:0003735">
    <property type="term" value="F:structural constituent of ribosome"/>
    <property type="evidence" value="ECO:0007669"/>
    <property type="project" value="InterPro"/>
</dbReference>
<dbReference type="GO" id="GO:0006412">
    <property type="term" value="P:translation"/>
    <property type="evidence" value="ECO:0007669"/>
    <property type="project" value="UniProtKB-UniRule"/>
</dbReference>
<dbReference type="FunFam" id="2.20.28.120:FF:000006">
    <property type="entry name" value="50S ribosomal protein L33"/>
    <property type="match status" value="1"/>
</dbReference>
<dbReference type="Gene3D" id="2.20.28.120">
    <property type="entry name" value="Ribosomal protein L33"/>
    <property type="match status" value="1"/>
</dbReference>
<dbReference type="HAMAP" id="MF_00294">
    <property type="entry name" value="Ribosomal_bL33"/>
    <property type="match status" value="1"/>
</dbReference>
<dbReference type="InterPro" id="IPR001705">
    <property type="entry name" value="Ribosomal_bL33"/>
</dbReference>
<dbReference type="InterPro" id="IPR038584">
    <property type="entry name" value="Ribosomal_bL33_sf"/>
</dbReference>
<dbReference type="InterPro" id="IPR011332">
    <property type="entry name" value="Ribosomal_zn-bd"/>
</dbReference>
<dbReference type="NCBIfam" id="NF001860">
    <property type="entry name" value="PRK00595.1"/>
    <property type="match status" value="1"/>
</dbReference>
<dbReference type="NCBIfam" id="TIGR01023">
    <property type="entry name" value="rpmG_bact"/>
    <property type="match status" value="1"/>
</dbReference>
<dbReference type="PANTHER" id="PTHR15238">
    <property type="entry name" value="54S RIBOSOMAL PROTEIN L39, MITOCHONDRIAL"/>
    <property type="match status" value="1"/>
</dbReference>
<dbReference type="PANTHER" id="PTHR15238:SF1">
    <property type="entry name" value="LARGE RIBOSOMAL SUBUNIT PROTEIN BL33M"/>
    <property type="match status" value="1"/>
</dbReference>
<dbReference type="Pfam" id="PF00471">
    <property type="entry name" value="Ribosomal_L33"/>
    <property type="match status" value="1"/>
</dbReference>
<dbReference type="SUPFAM" id="SSF57829">
    <property type="entry name" value="Zn-binding ribosomal proteins"/>
    <property type="match status" value="1"/>
</dbReference>
<keyword id="KW-0687">Ribonucleoprotein</keyword>
<keyword id="KW-0689">Ribosomal protein</keyword>
<evidence type="ECO:0000255" key="1">
    <source>
        <dbReference type="HAMAP-Rule" id="MF_00294"/>
    </source>
</evidence>
<evidence type="ECO:0000305" key="2"/>
<proteinExistence type="inferred from homology"/>
<organism>
    <name type="scientific">Rickettsia bellii (strain RML369-C)</name>
    <dbReference type="NCBI Taxonomy" id="336407"/>
    <lineage>
        <taxon>Bacteria</taxon>
        <taxon>Pseudomonadati</taxon>
        <taxon>Pseudomonadota</taxon>
        <taxon>Alphaproteobacteria</taxon>
        <taxon>Rickettsiales</taxon>
        <taxon>Rickettsiaceae</taxon>
        <taxon>Rickettsieae</taxon>
        <taxon>Rickettsia</taxon>
        <taxon>belli group</taxon>
    </lineage>
</organism>
<name>RL33_RICBR</name>
<reference key="1">
    <citation type="journal article" date="2006" name="PLoS Genet.">
        <title>Genome sequence of Rickettsia bellii illuminates the role of amoebae in gene exchanges between intracellular pathogens.</title>
        <authorList>
            <person name="Ogata H."/>
            <person name="La Scola B."/>
            <person name="Audic S."/>
            <person name="Renesto P."/>
            <person name="Blanc G."/>
            <person name="Robert C."/>
            <person name="Fournier P.-E."/>
            <person name="Claverie J.-M."/>
            <person name="Raoult D."/>
        </authorList>
    </citation>
    <scope>NUCLEOTIDE SEQUENCE [LARGE SCALE GENOMIC DNA]</scope>
    <source>
        <strain>RML369-C</strain>
    </source>
</reference>
<comment type="similarity">
    <text evidence="1">Belongs to the bacterial ribosomal protein bL33 family.</text>
</comment>
<feature type="chain" id="PRO_0000278014" description="Large ribosomal subunit protein bL33">
    <location>
        <begin position="1"/>
        <end position="56"/>
    </location>
</feature>
<protein>
    <recommendedName>
        <fullName evidence="1">Large ribosomal subunit protein bL33</fullName>
    </recommendedName>
    <alternativeName>
        <fullName evidence="2">50S ribosomal protein L33</fullName>
    </alternativeName>
</protein>